<organism>
    <name type="scientific">Buchnera aphidicola subsp. Acyrthosiphon pisum (strain APS)</name>
    <name type="common">Acyrthosiphon pisum symbiotic bacterium</name>
    <dbReference type="NCBI Taxonomy" id="107806"/>
    <lineage>
        <taxon>Bacteria</taxon>
        <taxon>Pseudomonadati</taxon>
        <taxon>Pseudomonadota</taxon>
        <taxon>Gammaproteobacteria</taxon>
        <taxon>Enterobacterales</taxon>
        <taxon>Erwiniaceae</taxon>
        <taxon>Buchnera</taxon>
    </lineage>
</organism>
<sequence>MKQYIKLIKKIIRVGNQKKDRTGTGTLSIFGYNMKFDLKKGFPLLTTKKCHIASIIYELLWFLKGDTNISYLNENKISIWNNWANESGDVGPIYGKQWRNWSTPEGHEIDQIKNVLIQLKKNPDSRRMLVSSWNVGDIDKMRLPPCHVLFQFYVFNNTLSCQLYQRSCDVFLGLPFNIASYSILIHMIAQQCDLKVGDFLWTGGDVHLYNNHIELAKKQILRIPRTLPKLTILKKPQSLFQYCFEDFKIIGYHPYPAIKGEISI</sequence>
<evidence type="ECO:0000255" key="1">
    <source>
        <dbReference type="HAMAP-Rule" id="MF_00008"/>
    </source>
</evidence>
<reference key="1">
    <citation type="journal article" date="2000" name="Nature">
        <title>Genome sequence of the endocellular bacterial symbiont of aphids Buchnera sp. APS.</title>
        <authorList>
            <person name="Shigenobu S."/>
            <person name="Watanabe H."/>
            <person name="Hattori M."/>
            <person name="Sakaki Y."/>
            <person name="Ishikawa H."/>
        </authorList>
    </citation>
    <scope>NUCLEOTIDE SEQUENCE [LARGE SCALE GENOMIC DNA]</scope>
    <source>
        <strain>APS</strain>
    </source>
</reference>
<keyword id="KW-0963">Cytoplasm</keyword>
<keyword id="KW-0489">Methyltransferase</keyword>
<keyword id="KW-0545">Nucleotide biosynthesis</keyword>
<keyword id="KW-1185">Reference proteome</keyword>
<keyword id="KW-0808">Transferase</keyword>
<gene>
    <name evidence="1" type="primary">thyA</name>
    <name type="ordered locus">BU440</name>
</gene>
<name>TYSY_BUCAI</name>
<proteinExistence type="inferred from homology"/>
<dbReference type="EC" id="2.1.1.45" evidence="1"/>
<dbReference type="EMBL" id="BA000003">
    <property type="protein sequence ID" value="BAB13138.1"/>
    <property type="molecule type" value="Genomic_DNA"/>
</dbReference>
<dbReference type="RefSeq" id="NP_240252.1">
    <property type="nucleotide sequence ID" value="NC_002528.1"/>
</dbReference>
<dbReference type="RefSeq" id="WP_010896117.1">
    <property type="nucleotide sequence ID" value="NC_002528.1"/>
</dbReference>
<dbReference type="SMR" id="P57515"/>
<dbReference type="STRING" id="563178.BUAP5A_433"/>
<dbReference type="EnsemblBacteria" id="BAB13138">
    <property type="protein sequence ID" value="BAB13138"/>
    <property type="gene ID" value="BAB13138"/>
</dbReference>
<dbReference type="KEGG" id="buc:BU440"/>
<dbReference type="PATRIC" id="fig|107806.10.peg.449"/>
<dbReference type="eggNOG" id="COG0207">
    <property type="taxonomic scope" value="Bacteria"/>
</dbReference>
<dbReference type="HOGENOM" id="CLU_021669_0_0_6"/>
<dbReference type="UniPathway" id="UPA00575"/>
<dbReference type="Proteomes" id="UP000001806">
    <property type="component" value="Chromosome"/>
</dbReference>
<dbReference type="GO" id="GO:0005829">
    <property type="term" value="C:cytosol"/>
    <property type="evidence" value="ECO:0007669"/>
    <property type="project" value="TreeGrafter"/>
</dbReference>
<dbReference type="GO" id="GO:0004799">
    <property type="term" value="F:thymidylate synthase activity"/>
    <property type="evidence" value="ECO:0007669"/>
    <property type="project" value="UniProtKB-UniRule"/>
</dbReference>
<dbReference type="GO" id="GO:0006231">
    <property type="term" value="P:dTMP biosynthetic process"/>
    <property type="evidence" value="ECO:0007669"/>
    <property type="project" value="UniProtKB-UniRule"/>
</dbReference>
<dbReference type="GO" id="GO:0006235">
    <property type="term" value="P:dTTP biosynthetic process"/>
    <property type="evidence" value="ECO:0007669"/>
    <property type="project" value="UniProtKB-UniRule"/>
</dbReference>
<dbReference type="GO" id="GO:0032259">
    <property type="term" value="P:methylation"/>
    <property type="evidence" value="ECO:0007669"/>
    <property type="project" value="UniProtKB-KW"/>
</dbReference>
<dbReference type="CDD" id="cd00351">
    <property type="entry name" value="TS_Pyrimidine_HMase"/>
    <property type="match status" value="1"/>
</dbReference>
<dbReference type="FunFam" id="3.30.572.10:FF:000013">
    <property type="entry name" value="Thymidylate synthase"/>
    <property type="match status" value="1"/>
</dbReference>
<dbReference type="Gene3D" id="3.30.572.10">
    <property type="entry name" value="Thymidylate synthase/dCMP hydroxymethylase domain"/>
    <property type="match status" value="1"/>
</dbReference>
<dbReference type="HAMAP" id="MF_00008">
    <property type="entry name" value="Thymidy_synth_bact"/>
    <property type="match status" value="1"/>
</dbReference>
<dbReference type="InterPro" id="IPR045097">
    <property type="entry name" value="Thymidate_synth/dCMP_Mease"/>
</dbReference>
<dbReference type="InterPro" id="IPR023451">
    <property type="entry name" value="Thymidate_synth/dCMP_Mease_dom"/>
</dbReference>
<dbReference type="InterPro" id="IPR036926">
    <property type="entry name" value="Thymidate_synth/dCMP_Mease_sf"/>
</dbReference>
<dbReference type="InterPro" id="IPR000398">
    <property type="entry name" value="Thymidylate_synthase"/>
</dbReference>
<dbReference type="InterPro" id="IPR020940">
    <property type="entry name" value="Thymidylate_synthase_AS"/>
</dbReference>
<dbReference type="NCBIfam" id="NF002497">
    <property type="entry name" value="PRK01827.1-3"/>
    <property type="match status" value="1"/>
</dbReference>
<dbReference type="NCBIfam" id="NF002499">
    <property type="entry name" value="PRK01827.1-5"/>
    <property type="match status" value="1"/>
</dbReference>
<dbReference type="NCBIfam" id="TIGR03284">
    <property type="entry name" value="thym_sym"/>
    <property type="match status" value="2"/>
</dbReference>
<dbReference type="PANTHER" id="PTHR11548:SF9">
    <property type="entry name" value="THYMIDYLATE SYNTHASE"/>
    <property type="match status" value="1"/>
</dbReference>
<dbReference type="PANTHER" id="PTHR11548">
    <property type="entry name" value="THYMIDYLATE SYNTHASE 1"/>
    <property type="match status" value="1"/>
</dbReference>
<dbReference type="Pfam" id="PF00303">
    <property type="entry name" value="Thymidylat_synt"/>
    <property type="match status" value="1"/>
</dbReference>
<dbReference type="PRINTS" id="PR00108">
    <property type="entry name" value="THYMDSNTHASE"/>
</dbReference>
<dbReference type="SUPFAM" id="SSF55831">
    <property type="entry name" value="Thymidylate synthase/dCMP hydroxymethylase"/>
    <property type="match status" value="1"/>
</dbReference>
<dbReference type="PROSITE" id="PS00091">
    <property type="entry name" value="THYMIDYLATE_SYNTHASE"/>
    <property type="match status" value="1"/>
</dbReference>
<protein>
    <recommendedName>
        <fullName evidence="1">Thymidylate synthase</fullName>
        <shortName evidence="1">TS</shortName>
        <shortName evidence="1">TSase</shortName>
        <ecNumber evidence="1">2.1.1.45</ecNumber>
    </recommendedName>
</protein>
<comment type="function">
    <text evidence="1">Catalyzes the reductive methylation of 2'-deoxyuridine-5'-monophosphate (dUMP) to 2'-deoxythymidine-5'-monophosphate (dTMP) while utilizing 5,10-methylenetetrahydrofolate (mTHF) as the methyl donor and reductant in the reaction, yielding dihydrofolate (DHF) as a by-product. This enzymatic reaction provides an intracellular de novo source of dTMP, an essential precursor for DNA biosynthesis.</text>
</comment>
<comment type="catalytic activity">
    <reaction evidence="1">
        <text>dUMP + (6R)-5,10-methylene-5,6,7,8-tetrahydrofolate = 7,8-dihydrofolate + dTMP</text>
        <dbReference type="Rhea" id="RHEA:12104"/>
        <dbReference type="ChEBI" id="CHEBI:15636"/>
        <dbReference type="ChEBI" id="CHEBI:57451"/>
        <dbReference type="ChEBI" id="CHEBI:63528"/>
        <dbReference type="ChEBI" id="CHEBI:246422"/>
        <dbReference type="EC" id="2.1.1.45"/>
    </reaction>
</comment>
<comment type="pathway">
    <text evidence="1">Pyrimidine metabolism; dTTP biosynthesis.</text>
</comment>
<comment type="subunit">
    <text evidence="1">Homodimer.</text>
</comment>
<comment type="subcellular location">
    <subcellularLocation>
        <location evidence="1">Cytoplasm</location>
    </subcellularLocation>
</comment>
<comment type="similarity">
    <text evidence="1">Belongs to the thymidylate synthase family. Bacterial-type ThyA subfamily.</text>
</comment>
<accession>P57515</accession>
<feature type="chain" id="PRO_0000140944" description="Thymidylate synthase">
    <location>
        <begin position="1"/>
        <end position="264"/>
    </location>
</feature>
<feature type="active site" description="Nucleophile" evidence="1">
    <location>
        <position position="146"/>
    </location>
</feature>
<feature type="binding site" description="in other chain" evidence="1">
    <location>
        <position position="21"/>
    </location>
    <ligand>
        <name>dUMP</name>
        <dbReference type="ChEBI" id="CHEBI:246422"/>
        <note>ligand shared between dimeric partners</note>
    </ligand>
</feature>
<feature type="binding site" evidence="1">
    <location>
        <position position="51"/>
    </location>
    <ligand>
        <name>(6R)-5,10-methylene-5,6,7,8-tetrahydrofolate</name>
        <dbReference type="ChEBI" id="CHEBI:15636"/>
    </ligand>
</feature>
<feature type="binding site" evidence="1">
    <location>
        <begin position="126"/>
        <end position="127"/>
    </location>
    <ligand>
        <name>dUMP</name>
        <dbReference type="ChEBI" id="CHEBI:246422"/>
        <note>ligand shared between dimeric partners</note>
    </ligand>
</feature>
<feature type="binding site" description="in other chain" evidence="1">
    <location>
        <begin position="166"/>
        <end position="169"/>
    </location>
    <ligand>
        <name>dUMP</name>
        <dbReference type="ChEBI" id="CHEBI:246422"/>
        <note>ligand shared between dimeric partners</note>
    </ligand>
</feature>
<feature type="binding site" evidence="1">
    <location>
        <position position="169"/>
    </location>
    <ligand>
        <name>(6R)-5,10-methylene-5,6,7,8-tetrahydrofolate</name>
        <dbReference type="ChEBI" id="CHEBI:15636"/>
    </ligand>
</feature>
<feature type="binding site" description="in other chain" evidence="1">
    <location>
        <position position="177"/>
    </location>
    <ligand>
        <name>dUMP</name>
        <dbReference type="ChEBI" id="CHEBI:246422"/>
        <note>ligand shared between dimeric partners</note>
    </ligand>
</feature>
<feature type="binding site" description="in other chain" evidence="1">
    <location>
        <begin position="207"/>
        <end position="209"/>
    </location>
    <ligand>
        <name>dUMP</name>
        <dbReference type="ChEBI" id="CHEBI:246422"/>
        <note>ligand shared between dimeric partners</note>
    </ligand>
</feature>
<feature type="binding site" evidence="1">
    <location>
        <position position="263"/>
    </location>
    <ligand>
        <name>(6R)-5,10-methylene-5,6,7,8-tetrahydrofolate</name>
        <dbReference type="ChEBI" id="CHEBI:15636"/>
    </ligand>
</feature>